<protein>
    <recommendedName>
        <fullName evidence="1">ATP-dependent Clp protease proteolytic subunit</fullName>
        <ecNumber evidence="1">3.4.21.92</ecNumber>
    </recommendedName>
    <alternativeName>
        <fullName evidence="1">Endopeptidase Clp</fullName>
    </alternativeName>
</protein>
<feature type="chain" id="PRO_1000206149" description="ATP-dependent Clp protease proteolytic subunit">
    <location>
        <begin position="1"/>
        <end position="206"/>
    </location>
</feature>
<feature type="active site" description="Nucleophile" evidence="1">
    <location>
        <position position="110"/>
    </location>
</feature>
<feature type="active site" evidence="1">
    <location>
        <position position="135"/>
    </location>
</feature>
<sequence length="206" mass="22951">MSYSDQRELAPHMALVPMVVEQTSRGERSYDIFSRLLKERIIFLTGQVEDHMANLIVAQMLFLEAENPEKDIHLYINSPGGVITAGMSIYDTMQFIKPDVSTICMGQACSMGSFLLAAGAQGKRFCLPNSRVMIHQPLGGFQGQATDIEIHAKEILSIKARMNTLMAKHSGQPIEVIERDTERDRFMSAQDAVEYGLVDAVLTQRA</sequence>
<comment type="function">
    <text evidence="1">Cleaves peptides in various proteins in a process that requires ATP hydrolysis. Has a chymotrypsin-like activity. Plays a major role in the degradation of misfolded proteins.</text>
</comment>
<comment type="catalytic activity">
    <reaction evidence="1">
        <text>Hydrolysis of proteins to small peptides in the presence of ATP and magnesium. alpha-casein is the usual test substrate. In the absence of ATP, only oligopeptides shorter than five residues are hydrolyzed (such as succinyl-Leu-Tyr-|-NHMec, and Leu-Tyr-Leu-|-Tyr-Trp, in which cleavage of the -Tyr-|-Leu- and -Tyr-|-Trp bonds also occurs).</text>
        <dbReference type="EC" id="3.4.21.92"/>
    </reaction>
</comment>
<comment type="subunit">
    <text evidence="1">Fourteen ClpP subunits assemble into 2 heptameric rings which stack back to back to give a disk-like structure with a central cavity, resembling the structure of eukaryotic proteasomes.</text>
</comment>
<comment type="subcellular location">
    <subcellularLocation>
        <location evidence="1">Cytoplasm</location>
    </subcellularLocation>
</comment>
<comment type="similarity">
    <text evidence="1">Belongs to the peptidase S14 family.</text>
</comment>
<name>CLPP_EDWI9</name>
<accession>C5BCJ6</accession>
<dbReference type="EC" id="3.4.21.92" evidence="1"/>
<dbReference type="EMBL" id="CP001600">
    <property type="protein sequence ID" value="ACR68290.1"/>
    <property type="molecule type" value="Genomic_DNA"/>
</dbReference>
<dbReference type="RefSeq" id="WP_015461119.1">
    <property type="nucleotide sequence ID" value="NZ_CP169062.1"/>
</dbReference>
<dbReference type="SMR" id="C5BCJ6"/>
<dbReference type="STRING" id="67780.B6E78_15760"/>
<dbReference type="MEROPS" id="S14.001"/>
<dbReference type="GeneID" id="72527868"/>
<dbReference type="KEGG" id="eic:NT01EI_1078"/>
<dbReference type="PATRIC" id="fig|634503.3.peg.977"/>
<dbReference type="HOGENOM" id="CLU_058707_3_2_6"/>
<dbReference type="OrthoDB" id="9802800at2"/>
<dbReference type="Proteomes" id="UP000001485">
    <property type="component" value="Chromosome"/>
</dbReference>
<dbReference type="GO" id="GO:0005737">
    <property type="term" value="C:cytoplasm"/>
    <property type="evidence" value="ECO:0007669"/>
    <property type="project" value="UniProtKB-SubCell"/>
</dbReference>
<dbReference type="GO" id="GO:0009368">
    <property type="term" value="C:endopeptidase Clp complex"/>
    <property type="evidence" value="ECO:0007669"/>
    <property type="project" value="TreeGrafter"/>
</dbReference>
<dbReference type="GO" id="GO:0004176">
    <property type="term" value="F:ATP-dependent peptidase activity"/>
    <property type="evidence" value="ECO:0007669"/>
    <property type="project" value="InterPro"/>
</dbReference>
<dbReference type="GO" id="GO:0051117">
    <property type="term" value="F:ATPase binding"/>
    <property type="evidence" value="ECO:0007669"/>
    <property type="project" value="TreeGrafter"/>
</dbReference>
<dbReference type="GO" id="GO:0004252">
    <property type="term" value="F:serine-type endopeptidase activity"/>
    <property type="evidence" value="ECO:0007669"/>
    <property type="project" value="UniProtKB-UniRule"/>
</dbReference>
<dbReference type="GO" id="GO:0006515">
    <property type="term" value="P:protein quality control for misfolded or incompletely synthesized proteins"/>
    <property type="evidence" value="ECO:0007669"/>
    <property type="project" value="TreeGrafter"/>
</dbReference>
<dbReference type="CDD" id="cd07017">
    <property type="entry name" value="S14_ClpP_2"/>
    <property type="match status" value="1"/>
</dbReference>
<dbReference type="FunFam" id="3.90.226.10:FF:000001">
    <property type="entry name" value="ATP-dependent Clp protease proteolytic subunit"/>
    <property type="match status" value="1"/>
</dbReference>
<dbReference type="Gene3D" id="3.90.226.10">
    <property type="entry name" value="2-enoyl-CoA Hydratase, Chain A, domain 1"/>
    <property type="match status" value="1"/>
</dbReference>
<dbReference type="HAMAP" id="MF_00444">
    <property type="entry name" value="ClpP"/>
    <property type="match status" value="1"/>
</dbReference>
<dbReference type="InterPro" id="IPR001907">
    <property type="entry name" value="ClpP"/>
</dbReference>
<dbReference type="InterPro" id="IPR029045">
    <property type="entry name" value="ClpP/crotonase-like_dom_sf"/>
</dbReference>
<dbReference type="InterPro" id="IPR023562">
    <property type="entry name" value="ClpP/TepA"/>
</dbReference>
<dbReference type="InterPro" id="IPR033135">
    <property type="entry name" value="ClpP_His_AS"/>
</dbReference>
<dbReference type="InterPro" id="IPR018215">
    <property type="entry name" value="ClpP_Ser_AS"/>
</dbReference>
<dbReference type="NCBIfam" id="TIGR00493">
    <property type="entry name" value="clpP"/>
    <property type="match status" value="1"/>
</dbReference>
<dbReference type="NCBIfam" id="NF001368">
    <property type="entry name" value="PRK00277.1"/>
    <property type="match status" value="1"/>
</dbReference>
<dbReference type="NCBIfam" id="NF009205">
    <property type="entry name" value="PRK12553.1"/>
    <property type="match status" value="1"/>
</dbReference>
<dbReference type="PANTHER" id="PTHR10381">
    <property type="entry name" value="ATP-DEPENDENT CLP PROTEASE PROTEOLYTIC SUBUNIT"/>
    <property type="match status" value="1"/>
</dbReference>
<dbReference type="PANTHER" id="PTHR10381:SF70">
    <property type="entry name" value="ATP-DEPENDENT CLP PROTEASE PROTEOLYTIC SUBUNIT"/>
    <property type="match status" value="1"/>
</dbReference>
<dbReference type="Pfam" id="PF00574">
    <property type="entry name" value="CLP_protease"/>
    <property type="match status" value="1"/>
</dbReference>
<dbReference type="PRINTS" id="PR00127">
    <property type="entry name" value="CLPPROTEASEP"/>
</dbReference>
<dbReference type="SUPFAM" id="SSF52096">
    <property type="entry name" value="ClpP/crotonase"/>
    <property type="match status" value="1"/>
</dbReference>
<dbReference type="PROSITE" id="PS00382">
    <property type="entry name" value="CLP_PROTEASE_HIS"/>
    <property type="match status" value="1"/>
</dbReference>
<dbReference type="PROSITE" id="PS00381">
    <property type="entry name" value="CLP_PROTEASE_SER"/>
    <property type="match status" value="1"/>
</dbReference>
<evidence type="ECO:0000255" key="1">
    <source>
        <dbReference type="HAMAP-Rule" id="MF_00444"/>
    </source>
</evidence>
<keyword id="KW-0963">Cytoplasm</keyword>
<keyword id="KW-0378">Hydrolase</keyword>
<keyword id="KW-0645">Protease</keyword>
<keyword id="KW-0720">Serine protease</keyword>
<organism>
    <name type="scientific">Edwardsiella ictaluri (strain 93-146)</name>
    <dbReference type="NCBI Taxonomy" id="634503"/>
    <lineage>
        <taxon>Bacteria</taxon>
        <taxon>Pseudomonadati</taxon>
        <taxon>Pseudomonadota</taxon>
        <taxon>Gammaproteobacteria</taxon>
        <taxon>Enterobacterales</taxon>
        <taxon>Hafniaceae</taxon>
        <taxon>Edwardsiella</taxon>
    </lineage>
</organism>
<proteinExistence type="inferred from homology"/>
<reference key="1">
    <citation type="submission" date="2009-03" db="EMBL/GenBank/DDBJ databases">
        <title>Complete genome sequence of Edwardsiella ictaluri 93-146.</title>
        <authorList>
            <person name="Williams M.L."/>
            <person name="Gillaspy A.F."/>
            <person name="Dyer D.W."/>
            <person name="Thune R.L."/>
            <person name="Waldbieser G.C."/>
            <person name="Schuster S.C."/>
            <person name="Gipson J."/>
            <person name="Zaitshik J."/>
            <person name="Landry C."/>
            <person name="Lawrence M.L."/>
        </authorList>
    </citation>
    <scope>NUCLEOTIDE SEQUENCE [LARGE SCALE GENOMIC DNA]</scope>
    <source>
        <strain>93-146</strain>
    </source>
</reference>
<gene>
    <name evidence="1" type="primary">clpP</name>
    <name type="ordered locus">NT01EI_1078</name>
</gene>